<protein>
    <recommendedName>
        <fullName evidence="1">Small ribosomal subunit protein bS21</fullName>
    </recommendedName>
    <alternativeName>
        <fullName evidence="2">30S ribosomal protein S21</fullName>
    </alternativeName>
</protein>
<comment type="similarity">
    <text evidence="1">Belongs to the bacterial ribosomal protein bS21 family.</text>
</comment>
<sequence>MSKTVVRKNESLEDALRRFKRSVSKSGTIQEVRKREFYEKPSVKRKKKSEAARKRKFK</sequence>
<feature type="chain" id="PRO_0000266772" description="Small ribosomal subunit protein bS21">
    <location>
        <begin position="1"/>
        <end position="58"/>
    </location>
</feature>
<evidence type="ECO:0000255" key="1">
    <source>
        <dbReference type="HAMAP-Rule" id="MF_00358"/>
    </source>
</evidence>
<evidence type="ECO:0000305" key="2"/>
<accession>Q2FXZ7</accession>
<gene>
    <name evidence="1" type="primary">rpsU</name>
    <name type="ordered locus">SAOUHSC_01678</name>
</gene>
<organism>
    <name type="scientific">Staphylococcus aureus (strain NCTC 8325 / PS 47)</name>
    <dbReference type="NCBI Taxonomy" id="93061"/>
    <lineage>
        <taxon>Bacteria</taxon>
        <taxon>Bacillati</taxon>
        <taxon>Bacillota</taxon>
        <taxon>Bacilli</taxon>
        <taxon>Bacillales</taxon>
        <taxon>Staphylococcaceae</taxon>
        <taxon>Staphylococcus</taxon>
    </lineage>
</organism>
<proteinExistence type="evidence at protein level"/>
<reference key="1">
    <citation type="book" date="2006" name="Gram positive pathogens, 2nd edition">
        <title>The Staphylococcus aureus NCTC 8325 genome.</title>
        <editorList>
            <person name="Fischetti V."/>
            <person name="Novick R."/>
            <person name="Ferretti J."/>
            <person name="Portnoy D."/>
            <person name="Rood J."/>
        </editorList>
        <authorList>
            <person name="Gillaspy A.F."/>
            <person name="Worrell V."/>
            <person name="Orvis J."/>
            <person name="Roe B.A."/>
            <person name="Dyer D.W."/>
            <person name="Iandolo J.J."/>
        </authorList>
    </citation>
    <scope>NUCLEOTIDE SEQUENCE [LARGE SCALE GENOMIC DNA]</scope>
    <source>
        <strain>NCTC 8325 / PS 47</strain>
    </source>
</reference>
<name>RS21_STAA8</name>
<keyword id="KW-0002">3D-structure</keyword>
<keyword id="KW-1185">Reference proteome</keyword>
<keyword id="KW-0687">Ribonucleoprotein</keyword>
<keyword id="KW-0689">Ribosomal protein</keyword>
<dbReference type="EMBL" id="CP000253">
    <property type="protein sequence ID" value="ABD30752.1"/>
    <property type="molecule type" value="Genomic_DNA"/>
</dbReference>
<dbReference type="RefSeq" id="WP_000048060.1">
    <property type="nucleotide sequence ID" value="NZ_LS483365.1"/>
</dbReference>
<dbReference type="RefSeq" id="YP_500188.1">
    <property type="nucleotide sequence ID" value="NC_007795.1"/>
</dbReference>
<dbReference type="PDB" id="5ND8">
    <property type="method" value="EM"/>
    <property type="resolution" value="3.70 A"/>
    <property type="chains" value="u=1-58"/>
</dbReference>
<dbReference type="PDB" id="5ND9">
    <property type="method" value="EM"/>
    <property type="resolution" value="3.70 A"/>
    <property type="chains" value="u=1-58"/>
</dbReference>
<dbReference type="PDBsum" id="5ND8"/>
<dbReference type="PDBsum" id="5ND9"/>
<dbReference type="EMDB" id="EMD-3624"/>
<dbReference type="EMDB" id="EMD-3625"/>
<dbReference type="SMR" id="Q2FXZ7"/>
<dbReference type="STRING" id="93061.SAOUHSC_01678"/>
<dbReference type="PaxDb" id="1280-SAXN108_1600"/>
<dbReference type="GeneID" id="3920089"/>
<dbReference type="GeneID" id="98345946"/>
<dbReference type="KEGG" id="sao:SAOUHSC_01678"/>
<dbReference type="PATRIC" id="fig|93061.5.peg.1526"/>
<dbReference type="eggNOG" id="COG0828">
    <property type="taxonomic scope" value="Bacteria"/>
</dbReference>
<dbReference type="HOGENOM" id="CLU_159258_3_2_9"/>
<dbReference type="OrthoDB" id="9799244at2"/>
<dbReference type="PRO" id="PR:Q2FXZ7"/>
<dbReference type="Proteomes" id="UP000008816">
    <property type="component" value="Chromosome"/>
</dbReference>
<dbReference type="GO" id="GO:1990904">
    <property type="term" value="C:ribonucleoprotein complex"/>
    <property type="evidence" value="ECO:0007669"/>
    <property type="project" value="UniProtKB-KW"/>
</dbReference>
<dbReference type="GO" id="GO:0005840">
    <property type="term" value="C:ribosome"/>
    <property type="evidence" value="ECO:0007669"/>
    <property type="project" value="UniProtKB-KW"/>
</dbReference>
<dbReference type="GO" id="GO:0003735">
    <property type="term" value="F:structural constituent of ribosome"/>
    <property type="evidence" value="ECO:0007669"/>
    <property type="project" value="InterPro"/>
</dbReference>
<dbReference type="GO" id="GO:0006412">
    <property type="term" value="P:translation"/>
    <property type="evidence" value="ECO:0007669"/>
    <property type="project" value="UniProtKB-UniRule"/>
</dbReference>
<dbReference type="Gene3D" id="1.20.5.1150">
    <property type="entry name" value="Ribosomal protein S8"/>
    <property type="match status" value="1"/>
</dbReference>
<dbReference type="HAMAP" id="MF_00358">
    <property type="entry name" value="Ribosomal_bS21"/>
    <property type="match status" value="1"/>
</dbReference>
<dbReference type="InterPro" id="IPR001911">
    <property type="entry name" value="Ribosomal_bS21"/>
</dbReference>
<dbReference type="InterPro" id="IPR018278">
    <property type="entry name" value="Ribosomal_bS21_CS"/>
</dbReference>
<dbReference type="InterPro" id="IPR038380">
    <property type="entry name" value="Ribosomal_bS21_sf"/>
</dbReference>
<dbReference type="NCBIfam" id="TIGR00030">
    <property type="entry name" value="S21p"/>
    <property type="match status" value="1"/>
</dbReference>
<dbReference type="PANTHER" id="PTHR21109">
    <property type="entry name" value="MITOCHONDRIAL 28S RIBOSOMAL PROTEIN S21"/>
    <property type="match status" value="1"/>
</dbReference>
<dbReference type="PANTHER" id="PTHR21109:SF22">
    <property type="entry name" value="SMALL RIBOSOMAL SUBUNIT PROTEIN BS21"/>
    <property type="match status" value="1"/>
</dbReference>
<dbReference type="Pfam" id="PF01165">
    <property type="entry name" value="Ribosomal_S21"/>
    <property type="match status" value="1"/>
</dbReference>
<dbReference type="PRINTS" id="PR00976">
    <property type="entry name" value="RIBOSOMALS21"/>
</dbReference>
<dbReference type="PROSITE" id="PS01181">
    <property type="entry name" value="RIBOSOMAL_S21"/>
    <property type="match status" value="1"/>
</dbReference>